<organism>
    <name type="scientific">Brucella abortus biovar 1 (strain 9-941)</name>
    <dbReference type="NCBI Taxonomy" id="262698"/>
    <lineage>
        <taxon>Bacteria</taxon>
        <taxon>Pseudomonadati</taxon>
        <taxon>Pseudomonadota</taxon>
        <taxon>Alphaproteobacteria</taxon>
        <taxon>Hyphomicrobiales</taxon>
        <taxon>Brucellaceae</taxon>
        <taxon>Brucella/Ochrobactrum group</taxon>
        <taxon>Brucella</taxon>
    </lineage>
</organism>
<evidence type="ECO:0000250" key="1">
    <source>
        <dbReference type="UniProtKB" id="O30569"/>
    </source>
</evidence>
<evidence type="ECO:0000250" key="2">
    <source>
        <dbReference type="UniProtKB" id="Q2YMK2"/>
    </source>
</evidence>
<evidence type="ECO:0000255" key="3"/>
<evidence type="ECO:0000303" key="4">
    <source>
    </source>
</evidence>
<evidence type="ECO:0000305" key="5"/>
<comment type="function">
    <text evidence="1 2 4">A beta subtype methylase that recognizes the double-stranded sequence 5'-GANTC-3' and methylates A-2 on both strands (By similarity) (PubMed:12654995). CcrM-mediated methylation has important cellular functions. Contributes to the accurate cell-cycle control of DNA replication and cellular morphology (By similarity).</text>
</comment>
<comment type="catalytic activity">
    <reaction>
        <text>a 2'-deoxyadenosine in DNA + S-adenosyl-L-methionine = an N(6)-methyl-2'-deoxyadenosine in DNA + S-adenosyl-L-homocysteine + H(+)</text>
        <dbReference type="Rhea" id="RHEA:15197"/>
        <dbReference type="Rhea" id="RHEA-COMP:12418"/>
        <dbReference type="Rhea" id="RHEA-COMP:12419"/>
        <dbReference type="ChEBI" id="CHEBI:15378"/>
        <dbReference type="ChEBI" id="CHEBI:57856"/>
        <dbReference type="ChEBI" id="CHEBI:59789"/>
        <dbReference type="ChEBI" id="CHEBI:90615"/>
        <dbReference type="ChEBI" id="CHEBI:90616"/>
        <dbReference type="EC" id="2.1.1.72"/>
    </reaction>
</comment>
<comment type="similarity">
    <text evidence="5">Belongs to the N(4)/N(6)-methyltransferase family.</text>
</comment>
<name>CCRM_BRUAB</name>
<accession>P0C116</accession>
<accession>O30570</accession>
<accession>Q57EN0</accession>
<gene>
    <name type="primary">ccrM</name>
    <name type="synonym">babI</name>
    <name type="synonym">babIM</name>
    <name type="ordered locus">BruAb1_0513</name>
</gene>
<keyword id="KW-0235">DNA replication</keyword>
<keyword id="KW-0238">DNA-binding</keyword>
<keyword id="KW-0489">Methyltransferase</keyword>
<keyword id="KW-0949">S-adenosyl-L-methionine</keyword>
<keyword id="KW-0808">Transferase</keyword>
<dbReference type="EC" id="2.1.1.72"/>
<dbReference type="EMBL" id="AE017223">
    <property type="protein sequence ID" value="AAX73904.1"/>
    <property type="molecule type" value="Genomic_DNA"/>
</dbReference>
<dbReference type="RefSeq" id="WP_002969465.1">
    <property type="nucleotide sequence ID" value="NC_006932.1"/>
</dbReference>
<dbReference type="SMR" id="P0C116"/>
<dbReference type="REBASE" id="11024">
    <property type="entry name" value="M.BabAORF513P"/>
</dbReference>
<dbReference type="EnsemblBacteria" id="AAX73904">
    <property type="protein sequence ID" value="AAX73904"/>
    <property type="gene ID" value="BruAb1_0513"/>
</dbReference>
<dbReference type="KEGG" id="bmb:BruAb1_0513"/>
<dbReference type="HOGENOM" id="CLU_024927_5_1_5"/>
<dbReference type="Proteomes" id="UP000000540">
    <property type="component" value="Chromosome I"/>
</dbReference>
<dbReference type="GO" id="GO:0005737">
    <property type="term" value="C:cytoplasm"/>
    <property type="evidence" value="ECO:0007669"/>
    <property type="project" value="TreeGrafter"/>
</dbReference>
<dbReference type="GO" id="GO:0003677">
    <property type="term" value="F:DNA binding"/>
    <property type="evidence" value="ECO:0007669"/>
    <property type="project" value="UniProtKB-KW"/>
</dbReference>
<dbReference type="GO" id="GO:0008170">
    <property type="term" value="F:N-methyltransferase activity"/>
    <property type="evidence" value="ECO:0007669"/>
    <property type="project" value="InterPro"/>
</dbReference>
<dbReference type="GO" id="GO:0009007">
    <property type="term" value="F:site-specific DNA-methyltransferase (adenine-specific) activity"/>
    <property type="evidence" value="ECO:0007669"/>
    <property type="project" value="UniProtKB-EC"/>
</dbReference>
<dbReference type="GO" id="GO:0006260">
    <property type="term" value="P:DNA replication"/>
    <property type="evidence" value="ECO:0007669"/>
    <property type="project" value="UniProtKB-KW"/>
</dbReference>
<dbReference type="GO" id="GO:0032259">
    <property type="term" value="P:methylation"/>
    <property type="evidence" value="ECO:0007669"/>
    <property type="project" value="UniProtKB-KW"/>
</dbReference>
<dbReference type="FunFam" id="3.40.50.150:FF:000276">
    <property type="entry name" value="Methyltransferase"/>
    <property type="match status" value="1"/>
</dbReference>
<dbReference type="Gene3D" id="3.40.50.150">
    <property type="entry name" value="Vaccinia Virus protein VP39"/>
    <property type="match status" value="1"/>
</dbReference>
<dbReference type="InterPro" id="IPR002941">
    <property type="entry name" value="DNA_methylase_N4/N6"/>
</dbReference>
<dbReference type="InterPro" id="IPR002052">
    <property type="entry name" value="DNA_methylase_N6_adenine_CS"/>
</dbReference>
<dbReference type="InterPro" id="IPR040843">
    <property type="entry name" value="RAMA"/>
</dbReference>
<dbReference type="InterPro" id="IPR001091">
    <property type="entry name" value="RM_Methyltransferase"/>
</dbReference>
<dbReference type="InterPro" id="IPR029063">
    <property type="entry name" value="SAM-dependent_MTases_sf"/>
</dbReference>
<dbReference type="PANTHER" id="PTHR13370">
    <property type="entry name" value="RNA METHYLASE-RELATED"/>
    <property type="match status" value="1"/>
</dbReference>
<dbReference type="PANTHER" id="PTHR13370:SF3">
    <property type="entry name" value="TRNA (GUANINE(10)-N2)-METHYLTRANSFERASE HOMOLOG"/>
    <property type="match status" value="1"/>
</dbReference>
<dbReference type="Pfam" id="PF01555">
    <property type="entry name" value="N6_N4_Mtase"/>
    <property type="match status" value="1"/>
</dbReference>
<dbReference type="Pfam" id="PF18755">
    <property type="entry name" value="RAMA"/>
    <property type="match status" value="1"/>
</dbReference>
<dbReference type="PRINTS" id="PR00508">
    <property type="entry name" value="S21N4MTFRASE"/>
</dbReference>
<dbReference type="SUPFAM" id="SSF53335">
    <property type="entry name" value="S-adenosyl-L-methionine-dependent methyltransferases"/>
    <property type="match status" value="1"/>
</dbReference>
<dbReference type="PROSITE" id="PS00092">
    <property type="entry name" value="N6_MTASE"/>
    <property type="match status" value="1"/>
</dbReference>
<sequence length="377" mass="42202">MSLVRLAHELPIEAPRTAWLDSIIKGDCVSALERLPDHSVDVIFADPPYNLQLGGDLHRPDQSMVSAVDDHWDQFESFQAYDAFTRAWLLACRRVLKPNGTIWVIGSYHNIFRVGTQLQDLGFWLLNDIVWRKTNPMPNFRGRRFQNAHETLIWASREQKGKGYTFNYEAMKAANDDVQMRSDWLFPICTGSERLKDENGDKVHPTQKPEALLARIMMASSKPGDVILDPFFGSGTTGAVAKRLGRHFVGIEREQPYIDAATARINAVEPLGKAELTVMTGKRAEPRVAFTSVMEAGLLRPGTVLCDERRRFAAIVRADGTLTANGEAGSIHRIGARVQGFDACNGWTFWHFEENGVLKPIDALRKIIREQMAAAGA</sequence>
<protein>
    <recommendedName>
        <fullName evidence="2">DNA methyltransferase CcrM</fullName>
        <shortName>M.CcrM</shortName>
        <ecNumber>2.1.1.72</ecNumber>
    </recommendedName>
    <alternativeName>
        <fullName>Adenine-specific methyltransferase BabI</fullName>
    </alternativeName>
    <alternativeName>
        <fullName evidence="4">Probable orphan methyltransferase M.BabAORF513P</fullName>
        <shortName evidence="4">M.BabAORF513P</shortName>
    </alternativeName>
</protein>
<proteinExistence type="inferred from homology"/>
<feature type="chain" id="PRO_0000087985" description="DNA methyltransferase CcrM">
    <location>
        <begin position="1"/>
        <end position="377"/>
    </location>
</feature>
<feature type="domain" description="RAMA" evidence="3">
    <location>
        <begin position="271"/>
        <end position="373"/>
    </location>
</feature>
<reference key="1">
    <citation type="journal article" date="2005" name="J. Bacteriol.">
        <title>Completion of the genome sequence of Brucella abortus and comparison to the highly similar genomes of Brucella melitensis and Brucella suis.</title>
        <authorList>
            <person name="Halling S.M."/>
            <person name="Peterson-Burch B.D."/>
            <person name="Bricker B.J."/>
            <person name="Zuerner R.L."/>
            <person name="Qing Z."/>
            <person name="Li L.-L."/>
            <person name="Kapur V."/>
            <person name="Alt D.P."/>
            <person name="Olsen S.C."/>
        </authorList>
    </citation>
    <scope>NUCLEOTIDE SEQUENCE [LARGE SCALE GENOMIC DNA]</scope>
    <source>
        <strain>9-941</strain>
    </source>
</reference>
<reference key="2">
    <citation type="journal article" date="2003" name="Nucleic Acids Res.">
        <title>A nomenclature for restriction enzymes, DNA methyltransferases, homing endonucleases and their genes.</title>
        <authorList>
            <person name="Roberts R.J."/>
            <person name="Belfort M."/>
            <person name="Bestor T."/>
            <person name="Bhagwat A.S."/>
            <person name="Bickle T.A."/>
            <person name="Bitinaite J."/>
            <person name="Blumenthal R.M."/>
            <person name="Degtyarev S.K."/>
            <person name="Dryden D.T."/>
            <person name="Dybvig K."/>
            <person name="Firman K."/>
            <person name="Gromova E.S."/>
            <person name="Gumport R.I."/>
            <person name="Halford S.E."/>
            <person name="Hattman S."/>
            <person name="Heitman J."/>
            <person name="Hornby D.P."/>
            <person name="Janulaitis A."/>
            <person name="Jeltsch A."/>
            <person name="Josephsen J."/>
            <person name="Kiss A."/>
            <person name="Klaenhammer T.R."/>
            <person name="Kobayashi I."/>
            <person name="Kong H."/>
            <person name="Krueger D.H."/>
            <person name="Lacks S."/>
            <person name="Marinus M.G."/>
            <person name="Miyahara M."/>
            <person name="Morgan R.D."/>
            <person name="Murray N.E."/>
            <person name="Nagaraja V."/>
            <person name="Piekarowicz A."/>
            <person name="Pingoud A."/>
            <person name="Raleigh E."/>
            <person name="Rao D.N."/>
            <person name="Reich N."/>
            <person name="Repin V.E."/>
            <person name="Selker E.U."/>
            <person name="Shaw P.C."/>
            <person name="Stein D.C."/>
            <person name="Stoddard B.L."/>
            <person name="Szybalski W."/>
            <person name="Trautner T.A."/>
            <person name="Van Etten J.L."/>
            <person name="Vitor J.M."/>
            <person name="Wilson G.G."/>
            <person name="Xu S.Y."/>
        </authorList>
    </citation>
    <scope>NOMENCLATURE</scope>
    <scope>SUBTYPE</scope>
</reference>